<feature type="initiator methionine" description="Removed" evidence="1">
    <location>
        <position position="1"/>
    </location>
</feature>
<feature type="chain" id="PRO_0000195956" description="Histone H1-I">
    <location>
        <begin position="2"/>
        <end position="261"/>
    </location>
</feature>
<feature type="domain" description="H15" evidence="3">
    <location>
        <begin position="58"/>
        <end position="129"/>
    </location>
</feature>
<feature type="repeat" description="1">
    <location>
        <begin position="136"/>
        <end position="140"/>
    </location>
</feature>
<feature type="repeat" description="2">
    <location>
        <begin position="188"/>
        <end position="192"/>
    </location>
</feature>
<feature type="repeat" description="3; approximate">
    <location>
        <begin position="199"/>
        <end position="203"/>
    </location>
</feature>
<feature type="repeat" description="4">
    <location>
        <begin position="209"/>
        <end position="213"/>
    </location>
</feature>
<feature type="repeat" description="5">
    <location>
        <begin position="230"/>
        <end position="234"/>
    </location>
</feature>
<feature type="repeat" description="6">
    <location>
        <begin position="236"/>
        <end position="240"/>
    </location>
</feature>
<feature type="repeat" description="7">
    <location>
        <begin position="246"/>
        <end position="250"/>
    </location>
</feature>
<feature type="DNA-binding region" evidence="2">
    <location>
        <begin position="139"/>
        <end position="142"/>
    </location>
</feature>
<feature type="region of interest" description="Disordered" evidence="4">
    <location>
        <begin position="1"/>
        <end position="63"/>
    </location>
</feature>
<feature type="region of interest" description="Disordered" evidence="4">
    <location>
        <begin position="125"/>
        <end position="261"/>
    </location>
</feature>
<feature type="region of interest" description="7 X 5 AA repeats of K-K-[AS]-T-P">
    <location>
        <begin position="136"/>
        <end position="250"/>
    </location>
</feature>
<feature type="compositionally biased region" description="Low complexity" evidence="4">
    <location>
        <begin position="1"/>
        <end position="22"/>
    </location>
</feature>
<feature type="compositionally biased region" description="Basic and acidic residues" evidence="4">
    <location>
        <begin position="41"/>
        <end position="50"/>
    </location>
</feature>
<feature type="compositionally biased region" description="Basic residues" evidence="4">
    <location>
        <begin position="133"/>
        <end position="142"/>
    </location>
</feature>
<feature type="compositionally biased region" description="Basic and acidic residues" evidence="4">
    <location>
        <begin position="143"/>
        <end position="198"/>
    </location>
</feature>
<feature type="compositionally biased region" description="Basic residues" evidence="4">
    <location>
        <begin position="227"/>
        <end position="250"/>
    </location>
</feature>
<feature type="compositionally biased region" description="Basic and acidic residues" evidence="4">
    <location>
        <begin position="251"/>
        <end position="261"/>
    </location>
</feature>
<proteinExistence type="evidence at transcript level"/>
<reference key="1">
    <citation type="journal article" date="1993" name="Gene">
        <title>Two histone H1-encoding genes of the green alga Volvox carteri with features intermediate between plant and animal genes.</title>
        <authorList>
            <person name="Lindauer A."/>
            <person name="Mueller K."/>
            <person name="Schmitt R."/>
        </authorList>
    </citation>
    <scope>NUCLEOTIDE SEQUENCE [GENOMIC DNA]</scope>
    <source>
        <strain>f. Nagariensis / HK10</strain>
    </source>
</reference>
<gene>
    <name type="primary">H1-I</name>
</gene>
<protein>
    <recommendedName>
        <fullName>Histone H1-I</fullName>
    </recommendedName>
</protein>
<sequence length="261" mass="27846">MSETEAAPVVAPAAEAAPAAEAPKAKAPKAKAPKQPKAPKAPKEPKAPKEKKPKAAPTHPPYIEMVKDAITTLKERNGSSLPALKKFIENKYGKDIHDKNFAKTLSQVVKTFVKGGKLVKVKGSFKLSEALKAKAKKSTPKKAKADGEAKPKKSEAKPKKAEAVKKTKAPKEKVERPKKEKKEKVEKKKATPKAEKPKKAATPKSAGKKKATPKPKAAPKSPAKKDAKPKKATPSKKAAPKKAPAKKSTPKAKEAKSKGKK</sequence>
<accession>Q08864</accession>
<evidence type="ECO:0000250" key="1"/>
<evidence type="ECO:0000255" key="2"/>
<evidence type="ECO:0000255" key="3">
    <source>
        <dbReference type="PROSITE-ProRule" id="PRU00837"/>
    </source>
</evidence>
<evidence type="ECO:0000256" key="4">
    <source>
        <dbReference type="SAM" id="MobiDB-lite"/>
    </source>
</evidence>
<name>H11_VOLCA</name>
<dbReference type="EMBL" id="L07946">
    <property type="protein sequence ID" value="AAA74723.1"/>
    <property type="molecule type" value="Genomic_DNA"/>
</dbReference>
<dbReference type="PIR" id="JN0747">
    <property type="entry name" value="JN0747"/>
</dbReference>
<dbReference type="SMR" id="Q08864"/>
<dbReference type="KEGG" id="vcn:VOLCADRAFT_88064"/>
<dbReference type="OMA" id="PPYIEMV"/>
<dbReference type="GO" id="GO:0000786">
    <property type="term" value="C:nucleosome"/>
    <property type="evidence" value="ECO:0007669"/>
    <property type="project" value="InterPro"/>
</dbReference>
<dbReference type="GO" id="GO:0005634">
    <property type="term" value="C:nucleus"/>
    <property type="evidence" value="ECO:0007669"/>
    <property type="project" value="UniProtKB-SubCell"/>
</dbReference>
<dbReference type="GO" id="GO:0003677">
    <property type="term" value="F:DNA binding"/>
    <property type="evidence" value="ECO:0007669"/>
    <property type="project" value="UniProtKB-KW"/>
</dbReference>
<dbReference type="GO" id="GO:0030527">
    <property type="term" value="F:structural constituent of chromatin"/>
    <property type="evidence" value="ECO:0007669"/>
    <property type="project" value="InterPro"/>
</dbReference>
<dbReference type="GO" id="GO:0006334">
    <property type="term" value="P:nucleosome assembly"/>
    <property type="evidence" value="ECO:0007669"/>
    <property type="project" value="InterPro"/>
</dbReference>
<dbReference type="CDD" id="cd00073">
    <property type="entry name" value="H15"/>
    <property type="match status" value="1"/>
</dbReference>
<dbReference type="Gene3D" id="1.10.10.10">
    <property type="entry name" value="Winged helix-like DNA-binding domain superfamily/Winged helix DNA-binding domain"/>
    <property type="match status" value="1"/>
</dbReference>
<dbReference type="InterPro" id="IPR005819">
    <property type="entry name" value="H1/H5"/>
</dbReference>
<dbReference type="InterPro" id="IPR005818">
    <property type="entry name" value="Histone_H1/H5_H15"/>
</dbReference>
<dbReference type="InterPro" id="IPR036388">
    <property type="entry name" value="WH-like_DNA-bd_sf"/>
</dbReference>
<dbReference type="InterPro" id="IPR036390">
    <property type="entry name" value="WH_DNA-bd_sf"/>
</dbReference>
<dbReference type="Pfam" id="PF00538">
    <property type="entry name" value="Linker_histone"/>
    <property type="match status" value="1"/>
</dbReference>
<dbReference type="PRINTS" id="PR00624">
    <property type="entry name" value="HISTONEH5"/>
</dbReference>
<dbReference type="SMART" id="SM00526">
    <property type="entry name" value="H15"/>
    <property type="match status" value="1"/>
</dbReference>
<dbReference type="SUPFAM" id="SSF46785">
    <property type="entry name" value="Winged helix' DNA-binding domain"/>
    <property type="match status" value="1"/>
</dbReference>
<dbReference type="PROSITE" id="PS51504">
    <property type="entry name" value="H15"/>
    <property type="match status" value="1"/>
</dbReference>
<comment type="function">
    <text>Histones H1 are necessary for the condensation of nucleosome chains into higher-order structures.</text>
</comment>
<comment type="subcellular location">
    <subcellularLocation>
        <location>Nucleus</location>
    </subcellularLocation>
    <subcellularLocation>
        <location>Chromosome</location>
    </subcellularLocation>
</comment>
<comment type="developmental stage">
    <text>Expression is restricted to embryogenesis.</text>
</comment>
<comment type="similarity">
    <text evidence="3">Belongs to the histone H1/H5 family.</text>
</comment>
<organism>
    <name type="scientific">Volvox carteri</name>
    <name type="common">Green alga</name>
    <dbReference type="NCBI Taxonomy" id="3067"/>
    <lineage>
        <taxon>Eukaryota</taxon>
        <taxon>Viridiplantae</taxon>
        <taxon>Chlorophyta</taxon>
        <taxon>core chlorophytes</taxon>
        <taxon>Chlorophyceae</taxon>
        <taxon>CS clade</taxon>
        <taxon>Chlamydomonadales</taxon>
        <taxon>Volvocaceae</taxon>
        <taxon>Volvox</taxon>
    </lineage>
</organism>
<keyword id="KW-0158">Chromosome</keyword>
<keyword id="KW-0238">DNA-binding</keyword>
<keyword id="KW-0539">Nucleus</keyword>
<keyword id="KW-0677">Repeat</keyword>